<sequence length="874" mass="94387">MKSAEIREAFLGFFEEQGHTRVASSSLIPGNDPTLLFTNAGMNQFKDCFLGQEKRAYTRAVTSQKCVRAGGKHNDLENVGYTARHHTFFEMLGNFSFGDYFKRDAITYAWTFLTSEKWLNLPKEKLWVTVYATDDEAYDIWTKEIGVPAERMVRIGDNKGAPYASDNFWTMGDTGPCGPCSEIFFDHGPEIWGGPPGSPEEDGDRYIEIWNNVFMQFNRTADGVLHPLPAPSVDTGMGLERVSAVLQHVHSNYEIDLFQSLLAASAKAIGCSNDNQASLKVVADHIRSCGFLIADGVLPSNEGRGYVLRRIIRRACRHGNKLGAKGSFFYQIVAALVAEMGSAFPELVQQQSHIERVLKGEEEQFAKTLEQGLKILEQDLADLKGTVVPGEVVFKLYDTYGFPMDLTGDIARERNLTLDEAGFEREMDAQRVRARSASSFGMDYNSLVKVDVATQFTGYSATTGSASVVALYKEGQSVTHLNEGEEGVVILDTTPFYAESGGQIGDSGFLHAGDVRFDVSDTTKTGGAFLHHGVVASGSLSVGAQVETQVADEVRDATKLNHSATHLLHAALRQVLGEHVQQKGSLVDSQRLRFDFSHFEAIKPEQLRALEDIVNAEIRKNTEVMTEETDIDTAKKKGAMALFGEKYGDSVRVLSMGGEFSVELCGGIHASRTGDIALFKIVSEGGVAAGVRRIEAVTGAAALAWLNAAEDQLKEAATLVKGNRDNLLDKLTAVLERNRLLEKQLEQLQAKAASAAGDDLSAAALDVKGVKVLATRLDGQDGKALLALVDQLKNKLGRAVILLGSVHEDKVVLVAGVTKDLTGQLKAGDLMKQAAAAVGGKGGGRPDMAQGGGVDAGALDSALALAVPFVEQGI</sequence>
<dbReference type="EC" id="6.1.1.7" evidence="1"/>
<dbReference type="EMBL" id="CP000058">
    <property type="protein sequence ID" value="AAZ35724.1"/>
    <property type="molecule type" value="Genomic_DNA"/>
</dbReference>
<dbReference type="RefSeq" id="WP_011169155.1">
    <property type="nucleotide sequence ID" value="NC_005773.3"/>
</dbReference>
<dbReference type="SMR" id="Q48G25"/>
<dbReference type="KEGG" id="psp:PSPPH_3512"/>
<dbReference type="eggNOG" id="COG0013">
    <property type="taxonomic scope" value="Bacteria"/>
</dbReference>
<dbReference type="HOGENOM" id="CLU_004485_1_1_6"/>
<dbReference type="Proteomes" id="UP000000551">
    <property type="component" value="Chromosome"/>
</dbReference>
<dbReference type="GO" id="GO:0005829">
    <property type="term" value="C:cytosol"/>
    <property type="evidence" value="ECO:0007669"/>
    <property type="project" value="TreeGrafter"/>
</dbReference>
<dbReference type="GO" id="GO:0004813">
    <property type="term" value="F:alanine-tRNA ligase activity"/>
    <property type="evidence" value="ECO:0007669"/>
    <property type="project" value="UniProtKB-UniRule"/>
</dbReference>
<dbReference type="GO" id="GO:0002161">
    <property type="term" value="F:aminoacyl-tRNA deacylase activity"/>
    <property type="evidence" value="ECO:0007669"/>
    <property type="project" value="TreeGrafter"/>
</dbReference>
<dbReference type="GO" id="GO:0005524">
    <property type="term" value="F:ATP binding"/>
    <property type="evidence" value="ECO:0007669"/>
    <property type="project" value="UniProtKB-UniRule"/>
</dbReference>
<dbReference type="GO" id="GO:0000049">
    <property type="term" value="F:tRNA binding"/>
    <property type="evidence" value="ECO:0007669"/>
    <property type="project" value="UniProtKB-KW"/>
</dbReference>
<dbReference type="GO" id="GO:0008270">
    <property type="term" value="F:zinc ion binding"/>
    <property type="evidence" value="ECO:0007669"/>
    <property type="project" value="UniProtKB-UniRule"/>
</dbReference>
<dbReference type="GO" id="GO:0006419">
    <property type="term" value="P:alanyl-tRNA aminoacylation"/>
    <property type="evidence" value="ECO:0007669"/>
    <property type="project" value="UniProtKB-UniRule"/>
</dbReference>
<dbReference type="GO" id="GO:0045892">
    <property type="term" value="P:negative regulation of DNA-templated transcription"/>
    <property type="evidence" value="ECO:0007669"/>
    <property type="project" value="TreeGrafter"/>
</dbReference>
<dbReference type="CDD" id="cd00673">
    <property type="entry name" value="AlaRS_core"/>
    <property type="match status" value="1"/>
</dbReference>
<dbReference type="FunFam" id="2.40.30.130:FF:000001">
    <property type="entry name" value="Alanine--tRNA ligase"/>
    <property type="match status" value="1"/>
</dbReference>
<dbReference type="FunFam" id="3.10.310.40:FF:000001">
    <property type="entry name" value="Alanine--tRNA ligase"/>
    <property type="match status" value="1"/>
</dbReference>
<dbReference type="FunFam" id="3.30.54.20:FF:000001">
    <property type="entry name" value="Alanine--tRNA ligase"/>
    <property type="match status" value="1"/>
</dbReference>
<dbReference type="FunFam" id="3.30.930.10:FF:000004">
    <property type="entry name" value="Alanine--tRNA ligase"/>
    <property type="match status" value="1"/>
</dbReference>
<dbReference type="FunFam" id="3.30.980.10:FF:000004">
    <property type="entry name" value="Alanine--tRNA ligase, cytoplasmic"/>
    <property type="match status" value="1"/>
</dbReference>
<dbReference type="Gene3D" id="2.40.30.130">
    <property type="match status" value="1"/>
</dbReference>
<dbReference type="Gene3D" id="3.10.310.40">
    <property type="match status" value="1"/>
</dbReference>
<dbReference type="Gene3D" id="3.30.54.20">
    <property type="match status" value="1"/>
</dbReference>
<dbReference type="Gene3D" id="6.10.250.550">
    <property type="match status" value="1"/>
</dbReference>
<dbReference type="Gene3D" id="3.30.930.10">
    <property type="entry name" value="Bira Bifunctional Protein, Domain 2"/>
    <property type="match status" value="1"/>
</dbReference>
<dbReference type="Gene3D" id="3.30.980.10">
    <property type="entry name" value="Threonyl-trna Synthetase, Chain A, domain 2"/>
    <property type="match status" value="1"/>
</dbReference>
<dbReference type="HAMAP" id="MF_00036_B">
    <property type="entry name" value="Ala_tRNA_synth_B"/>
    <property type="match status" value="1"/>
</dbReference>
<dbReference type="InterPro" id="IPR045864">
    <property type="entry name" value="aa-tRNA-synth_II/BPL/LPL"/>
</dbReference>
<dbReference type="InterPro" id="IPR002318">
    <property type="entry name" value="Ala-tRNA-lgiase_IIc"/>
</dbReference>
<dbReference type="InterPro" id="IPR018162">
    <property type="entry name" value="Ala-tRNA-ligase_IIc_anticod-bd"/>
</dbReference>
<dbReference type="InterPro" id="IPR018165">
    <property type="entry name" value="Ala-tRNA-synth_IIc_core"/>
</dbReference>
<dbReference type="InterPro" id="IPR018164">
    <property type="entry name" value="Ala-tRNA-synth_IIc_N"/>
</dbReference>
<dbReference type="InterPro" id="IPR050058">
    <property type="entry name" value="Ala-tRNA_ligase"/>
</dbReference>
<dbReference type="InterPro" id="IPR023033">
    <property type="entry name" value="Ala_tRNA_ligase_euk/bac"/>
</dbReference>
<dbReference type="InterPro" id="IPR003156">
    <property type="entry name" value="DHHA1_dom"/>
</dbReference>
<dbReference type="InterPro" id="IPR018163">
    <property type="entry name" value="Thr/Ala-tRNA-synth_IIc_edit"/>
</dbReference>
<dbReference type="InterPro" id="IPR009000">
    <property type="entry name" value="Transl_B-barrel_sf"/>
</dbReference>
<dbReference type="InterPro" id="IPR012947">
    <property type="entry name" value="tRNA_SAD"/>
</dbReference>
<dbReference type="NCBIfam" id="TIGR00344">
    <property type="entry name" value="alaS"/>
    <property type="match status" value="1"/>
</dbReference>
<dbReference type="PANTHER" id="PTHR11777:SF9">
    <property type="entry name" value="ALANINE--TRNA LIGASE, CYTOPLASMIC"/>
    <property type="match status" value="1"/>
</dbReference>
<dbReference type="PANTHER" id="PTHR11777">
    <property type="entry name" value="ALANYL-TRNA SYNTHETASE"/>
    <property type="match status" value="1"/>
</dbReference>
<dbReference type="Pfam" id="PF02272">
    <property type="entry name" value="DHHA1"/>
    <property type="match status" value="1"/>
</dbReference>
<dbReference type="Pfam" id="PF01411">
    <property type="entry name" value="tRNA-synt_2c"/>
    <property type="match status" value="1"/>
</dbReference>
<dbReference type="Pfam" id="PF07973">
    <property type="entry name" value="tRNA_SAD"/>
    <property type="match status" value="1"/>
</dbReference>
<dbReference type="PRINTS" id="PR00980">
    <property type="entry name" value="TRNASYNTHALA"/>
</dbReference>
<dbReference type="SMART" id="SM00863">
    <property type="entry name" value="tRNA_SAD"/>
    <property type="match status" value="1"/>
</dbReference>
<dbReference type="SUPFAM" id="SSF55681">
    <property type="entry name" value="Class II aaRS and biotin synthetases"/>
    <property type="match status" value="1"/>
</dbReference>
<dbReference type="SUPFAM" id="SSF101353">
    <property type="entry name" value="Putative anticodon-binding domain of alanyl-tRNA synthetase (AlaRS)"/>
    <property type="match status" value="1"/>
</dbReference>
<dbReference type="SUPFAM" id="SSF55186">
    <property type="entry name" value="ThrRS/AlaRS common domain"/>
    <property type="match status" value="1"/>
</dbReference>
<dbReference type="SUPFAM" id="SSF50447">
    <property type="entry name" value="Translation proteins"/>
    <property type="match status" value="1"/>
</dbReference>
<dbReference type="PROSITE" id="PS50860">
    <property type="entry name" value="AA_TRNA_LIGASE_II_ALA"/>
    <property type="match status" value="1"/>
</dbReference>
<comment type="function">
    <text evidence="1">Catalyzes the attachment of alanine to tRNA(Ala) in a two-step reaction: alanine is first activated by ATP to form Ala-AMP and then transferred to the acceptor end of tRNA(Ala). Also edits incorrectly charged Ser-tRNA(Ala) and Gly-tRNA(Ala) via its editing domain.</text>
</comment>
<comment type="catalytic activity">
    <reaction evidence="1">
        <text>tRNA(Ala) + L-alanine + ATP = L-alanyl-tRNA(Ala) + AMP + diphosphate</text>
        <dbReference type="Rhea" id="RHEA:12540"/>
        <dbReference type="Rhea" id="RHEA-COMP:9657"/>
        <dbReference type="Rhea" id="RHEA-COMP:9923"/>
        <dbReference type="ChEBI" id="CHEBI:30616"/>
        <dbReference type="ChEBI" id="CHEBI:33019"/>
        <dbReference type="ChEBI" id="CHEBI:57972"/>
        <dbReference type="ChEBI" id="CHEBI:78442"/>
        <dbReference type="ChEBI" id="CHEBI:78497"/>
        <dbReference type="ChEBI" id="CHEBI:456215"/>
        <dbReference type="EC" id="6.1.1.7"/>
    </reaction>
</comment>
<comment type="cofactor">
    <cofactor evidence="1">
        <name>Zn(2+)</name>
        <dbReference type="ChEBI" id="CHEBI:29105"/>
    </cofactor>
    <text evidence="1">Binds 1 zinc ion per subunit.</text>
</comment>
<comment type="subcellular location">
    <subcellularLocation>
        <location evidence="1">Cytoplasm</location>
    </subcellularLocation>
</comment>
<comment type="domain">
    <text evidence="1">Consists of three domains; the N-terminal catalytic domain, the editing domain and the C-terminal C-Ala domain. The editing domain removes incorrectly charged amino acids, while the C-Ala domain, along with tRNA(Ala), serves as a bridge to cooperatively bring together the editing and aminoacylation centers thus stimulating deacylation of misacylated tRNAs.</text>
</comment>
<comment type="similarity">
    <text evidence="1">Belongs to the class-II aminoacyl-tRNA synthetase family.</text>
</comment>
<name>SYA_PSE14</name>
<proteinExistence type="inferred from homology"/>
<gene>
    <name evidence="1" type="primary">alaS</name>
    <name type="ordered locus">PSPPH_3512</name>
</gene>
<organism>
    <name type="scientific">Pseudomonas savastanoi pv. phaseolicola (strain 1448A / Race 6)</name>
    <name type="common">Pseudomonas syringae pv. phaseolicola (strain 1448A / Race 6)</name>
    <dbReference type="NCBI Taxonomy" id="264730"/>
    <lineage>
        <taxon>Bacteria</taxon>
        <taxon>Pseudomonadati</taxon>
        <taxon>Pseudomonadota</taxon>
        <taxon>Gammaproteobacteria</taxon>
        <taxon>Pseudomonadales</taxon>
        <taxon>Pseudomonadaceae</taxon>
        <taxon>Pseudomonas</taxon>
    </lineage>
</organism>
<evidence type="ECO:0000255" key="1">
    <source>
        <dbReference type="HAMAP-Rule" id="MF_00036"/>
    </source>
</evidence>
<feature type="chain" id="PRO_0000075179" description="Alanine--tRNA ligase">
    <location>
        <begin position="1"/>
        <end position="874"/>
    </location>
</feature>
<feature type="binding site" evidence="1">
    <location>
        <position position="562"/>
    </location>
    <ligand>
        <name>Zn(2+)</name>
        <dbReference type="ChEBI" id="CHEBI:29105"/>
    </ligand>
</feature>
<feature type="binding site" evidence="1">
    <location>
        <position position="566"/>
    </location>
    <ligand>
        <name>Zn(2+)</name>
        <dbReference type="ChEBI" id="CHEBI:29105"/>
    </ligand>
</feature>
<feature type="binding site" evidence="1">
    <location>
        <position position="665"/>
    </location>
    <ligand>
        <name>Zn(2+)</name>
        <dbReference type="ChEBI" id="CHEBI:29105"/>
    </ligand>
</feature>
<feature type="binding site" evidence="1">
    <location>
        <position position="669"/>
    </location>
    <ligand>
        <name>Zn(2+)</name>
        <dbReference type="ChEBI" id="CHEBI:29105"/>
    </ligand>
</feature>
<keyword id="KW-0030">Aminoacyl-tRNA synthetase</keyword>
<keyword id="KW-0067">ATP-binding</keyword>
<keyword id="KW-0963">Cytoplasm</keyword>
<keyword id="KW-0436">Ligase</keyword>
<keyword id="KW-0479">Metal-binding</keyword>
<keyword id="KW-0547">Nucleotide-binding</keyword>
<keyword id="KW-0648">Protein biosynthesis</keyword>
<keyword id="KW-0694">RNA-binding</keyword>
<keyword id="KW-0820">tRNA-binding</keyword>
<keyword id="KW-0862">Zinc</keyword>
<reference key="1">
    <citation type="journal article" date="2005" name="J. Bacteriol.">
        <title>Whole-genome sequence analysis of Pseudomonas syringae pv. phaseolicola 1448A reveals divergence among pathovars in genes involved in virulence and transposition.</title>
        <authorList>
            <person name="Joardar V."/>
            <person name="Lindeberg M."/>
            <person name="Jackson R.W."/>
            <person name="Selengut J."/>
            <person name="Dodson R."/>
            <person name="Brinkac L.M."/>
            <person name="Daugherty S.C."/>
            <person name="DeBoy R.T."/>
            <person name="Durkin A.S."/>
            <person name="Gwinn Giglio M."/>
            <person name="Madupu R."/>
            <person name="Nelson W.C."/>
            <person name="Rosovitz M.J."/>
            <person name="Sullivan S.A."/>
            <person name="Crabtree J."/>
            <person name="Creasy T."/>
            <person name="Davidsen T.M."/>
            <person name="Haft D.H."/>
            <person name="Zafar N."/>
            <person name="Zhou L."/>
            <person name="Halpin R."/>
            <person name="Holley T."/>
            <person name="Khouri H.M."/>
            <person name="Feldblyum T.V."/>
            <person name="White O."/>
            <person name="Fraser C.M."/>
            <person name="Chatterjee A.K."/>
            <person name="Cartinhour S."/>
            <person name="Schneider D."/>
            <person name="Mansfield J.W."/>
            <person name="Collmer A."/>
            <person name="Buell R."/>
        </authorList>
    </citation>
    <scope>NUCLEOTIDE SEQUENCE [LARGE SCALE GENOMIC DNA]</scope>
    <source>
        <strain>1448A / Race 6</strain>
    </source>
</reference>
<protein>
    <recommendedName>
        <fullName evidence="1">Alanine--tRNA ligase</fullName>
        <ecNumber evidence="1">6.1.1.7</ecNumber>
    </recommendedName>
    <alternativeName>
        <fullName evidence="1">Alanyl-tRNA synthetase</fullName>
        <shortName evidence="1">AlaRS</shortName>
    </alternativeName>
</protein>
<accession>Q48G25</accession>